<sequence length="280" mass="30471">MATSLLLRHSSAVFFSQSSFFTKNKSFRSFTSIKMEKGEAENAVKTKKVFVAGATGQTGKRIVEQLLSRGFAVKAGVRDVEKAKTSFKDDPSLQIVRADVTEGPDKLAEVIGDDSQAVICATGFRPGFDIFTPWKVDNFGTVNLVDACRKQGVEKFVLVSSILVNGAAMGQILNPAYLFLNLFGLTLVAKLQAEKYIKKSGINYTIVRPGGLKNDPPTGNVVMEPEDTLYEGSISRDLVAEVAVEALLQEESSFKVVEIVARAEAPKRSYKDLFASVKGQ</sequence>
<keyword id="KW-0150">Chloroplast</keyword>
<keyword id="KW-0934">Plastid</keyword>
<keyword id="KW-1185">Reference proteome</keyword>
<keyword id="KW-0809">Transit peptide</keyword>
<protein>
    <recommendedName>
        <fullName>Uncharacterized protein At2g34460, chloroplastic</fullName>
    </recommendedName>
</protein>
<name>Y2446_ARATH</name>
<comment type="subcellular location">
    <subcellularLocation>
        <location evidence="2 3">Plastid</location>
        <location evidence="2 3">Chloroplast</location>
        <location evidence="2 3">Plastoglobule</location>
    </subcellularLocation>
</comment>
<comment type="similarity">
    <text evidence="4">Belongs to the NAD(P)-dependent epimerase/dehydratase family.</text>
</comment>
<comment type="sequence caution" evidence="4">
    <conflict type="erroneous gene model prediction">
        <sequence resource="EMBL-CDS" id="AAC26697"/>
    </conflict>
</comment>
<comment type="sequence caution" evidence="4">
    <conflict type="erroneous initiation">
        <sequence resource="EMBL-CDS" id="AAL08281"/>
    </conflict>
</comment>
<comment type="sequence caution" evidence="4">
    <conflict type="erroneous gene model prediction">
        <sequence resource="EMBL-CDS" id="AAM14955"/>
    </conflict>
</comment>
<proteinExistence type="evidence at protein level"/>
<feature type="transit peptide" description="Chloroplast" evidence="1">
    <location>
        <begin position="1"/>
        <end position="51"/>
    </location>
</feature>
<feature type="chain" id="PRO_0000286530" description="Uncharacterized protein At2g34460, chloroplastic">
    <location>
        <begin position="52"/>
        <end position="280"/>
    </location>
</feature>
<organism>
    <name type="scientific">Arabidopsis thaliana</name>
    <name type="common">Mouse-ear cress</name>
    <dbReference type="NCBI Taxonomy" id="3702"/>
    <lineage>
        <taxon>Eukaryota</taxon>
        <taxon>Viridiplantae</taxon>
        <taxon>Streptophyta</taxon>
        <taxon>Embryophyta</taxon>
        <taxon>Tracheophyta</taxon>
        <taxon>Spermatophyta</taxon>
        <taxon>Magnoliopsida</taxon>
        <taxon>eudicotyledons</taxon>
        <taxon>Gunneridae</taxon>
        <taxon>Pentapetalae</taxon>
        <taxon>rosids</taxon>
        <taxon>malvids</taxon>
        <taxon>Brassicales</taxon>
        <taxon>Brassicaceae</taxon>
        <taxon>Camelineae</taxon>
        <taxon>Arabidopsis</taxon>
    </lineage>
</organism>
<gene>
    <name type="ordered locus">At2g34460</name>
    <name type="ORF">T31E10.20</name>
</gene>
<dbReference type="EMBL" id="AC004077">
    <property type="protein sequence ID" value="AAC26697.2"/>
    <property type="status" value="ALT_SEQ"/>
    <property type="molecule type" value="Genomic_DNA"/>
</dbReference>
<dbReference type="EMBL" id="AC004481">
    <property type="protein sequence ID" value="AAM14955.1"/>
    <property type="status" value="ALT_SEQ"/>
    <property type="molecule type" value="Genomic_DNA"/>
</dbReference>
<dbReference type="EMBL" id="CP002685">
    <property type="protein sequence ID" value="AEC08977.1"/>
    <property type="molecule type" value="Genomic_DNA"/>
</dbReference>
<dbReference type="EMBL" id="AY034977">
    <property type="protein sequence ID" value="AAK59482.2"/>
    <property type="molecule type" value="mRNA"/>
</dbReference>
<dbReference type="EMBL" id="AY056425">
    <property type="protein sequence ID" value="AAL08281.1"/>
    <property type="status" value="ALT_INIT"/>
    <property type="molecule type" value="mRNA"/>
</dbReference>
<dbReference type="EMBL" id="BT000884">
    <property type="protein sequence ID" value="AAN41284.1"/>
    <property type="molecule type" value="mRNA"/>
</dbReference>
<dbReference type="PIR" id="T02333">
    <property type="entry name" value="T02333"/>
</dbReference>
<dbReference type="RefSeq" id="NP_565789.2">
    <property type="nucleotide sequence ID" value="NM_128998.4"/>
</dbReference>
<dbReference type="SMR" id="Q8H124"/>
<dbReference type="BioGRID" id="3356">
    <property type="interactions" value="4"/>
</dbReference>
<dbReference type="FunCoup" id="Q8H124">
    <property type="interactions" value="1891"/>
</dbReference>
<dbReference type="IntAct" id="Q8H124">
    <property type="interactions" value="4"/>
</dbReference>
<dbReference type="STRING" id="3702.Q8H124"/>
<dbReference type="iPTMnet" id="Q8H124"/>
<dbReference type="PaxDb" id="3702-AT2G34460.1"/>
<dbReference type="ProteomicsDB" id="243147"/>
<dbReference type="EnsemblPlants" id="AT2G34460.1">
    <property type="protein sequence ID" value="AT2G34460.1"/>
    <property type="gene ID" value="AT2G34460"/>
</dbReference>
<dbReference type="GeneID" id="818009"/>
<dbReference type="Gramene" id="AT2G34460.1">
    <property type="protein sequence ID" value="AT2G34460.1"/>
    <property type="gene ID" value="AT2G34460"/>
</dbReference>
<dbReference type="KEGG" id="ath:AT2G34460"/>
<dbReference type="Araport" id="AT2G34460"/>
<dbReference type="TAIR" id="AT2G34460"/>
<dbReference type="eggNOG" id="KOG1203">
    <property type="taxonomic scope" value="Eukaryota"/>
</dbReference>
<dbReference type="HOGENOM" id="CLU_025711_0_2_1"/>
<dbReference type="InParanoid" id="Q8H124"/>
<dbReference type="OMA" id="CTHHLLY"/>
<dbReference type="OrthoDB" id="419598at2759"/>
<dbReference type="PhylomeDB" id="Q8H124"/>
<dbReference type="PRO" id="PR:Q8H124"/>
<dbReference type="Proteomes" id="UP000006548">
    <property type="component" value="Chromosome 2"/>
</dbReference>
<dbReference type="ExpressionAtlas" id="Q8H124">
    <property type="expression patterns" value="baseline and differential"/>
</dbReference>
<dbReference type="GO" id="GO:0009507">
    <property type="term" value="C:chloroplast"/>
    <property type="evidence" value="ECO:0007005"/>
    <property type="project" value="TAIR"/>
</dbReference>
<dbReference type="GO" id="GO:0009941">
    <property type="term" value="C:chloroplast envelope"/>
    <property type="evidence" value="ECO:0007005"/>
    <property type="project" value="TAIR"/>
</dbReference>
<dbReference type="GO" id="GO:0009534">
    <property type="term" value="C:chloroplast thylakoid"/>
    <property type="evidence" value="ECO:0007005"/>
    <property type="project" value="TAIR"/>
</dbReference>
<dbReference type="GO" id="GO:0009535">
    <property type="term" value="C:chloroplast thylakoid membrane"/>
    <property type="evidence" value="ECO:0007005"/>
    <property type="project" value="TAIR"/>
</dbReference>
<dbReference type="GO" id="GO:0005783">
    <property type="term" value="C:endoplasmic reticulum"/>
    <property type="evidence" value="ECO:0007005"/>
    <property type="project" value="TAIR"/>
</dbReference>
<dbReference type="GO" id="GO:0010287">
    <property type="term" value="C:plastoglobule"/>
    <property type="evidence" value="ECO:0007005"/>
    <property type="project" value="TAIR"/>
</dbReference>
<dbReference type="CDD" id="cd05243">
    <property type="entry name" value="SDR_a5"/>
    <property type="match status" value="1"/>
</dbReference>
<dbReference type="FunFam" id="3.40.50.720:FF:000499">
    <property type="entry name" value="Protein TIC 62, chloroplastic"/>
    <property type="match status" value="1"/>
</dbReference>
<dbReference type="Gene3D" id="3.40.50.720">
    <property type="entry name" value="NAD(P)-binding Rossmann-like Domain"/>
    <property type="match status" value="1"/>
</dbReference>
<dbReference type="InterPro" id="IPR016040">
    <property type="entry name" value="NAD(P)-bd_dom"/>
</dbReference>
<dbReference type="InterPro" id="IPR036291">
    <property type="entry name" value="NAD(P)-bd_dom_sf"/>
</dbReference>
<dbReference type="PANTHER" id="PTHR15020">
    <property type="entry name" value="FLAVIN REDUCTASE-RELATED"/>
    <property type="match status" value="1"/>
</dbReference>
<dbReference type="PANTHER" id="PTHR15020:SF11">
    <property type="entry name" value="OS06G0360300 PROTEIN"/>
    <property type="match status" value="1"/>
</dbReference>
<dbReference type="Pfam" id="PF13460">
    <property type="entry name" value="NAD_binding_10"/>
    <property type="match status" value="1"/>
</dbReference>
<dbReference type="SUPFAM" id="SSF51735">
    <property type="entry name" value="NAD(P)-binding Rossmann-fold domains"/>
    <property type="match status" value="1"/>
</dbReference>
<evidence type="ECO:0000255" key="1"/>
<evidence type="ECO:0000269" key="2">
    <source>
    </source>
</evidence>
<evidence type="ECO:0000269" key="3">
    <source>
    </source>
</evidence>
<evidence type="ECO:0000305" key="4"/>
<accession>Q8H124</accession>
<accession>O64701</accession>
<accession>Q7EXF0</accession>
<accession>Q93W50</accession>
<reference key="1">
    <citation type="journal article" date="1999" name="Nature">
        <title>Sequence and analysis of chromosome 2 of the plant Arabidopsis thaliana.</title>
        <authorList>
            <person name="Lin X."/>
            <person name="Kaul S."/>
            <person name="Rounsley S.D."/>
            <person name="Shea T.P."/>
            <person name="Benito M.-I."/>
            <person name="Town C.D."/>
            <person name="Fujii C.Y."/>
            <person name="Mason T.M."/>
            <person name="Bowman C.L."/>
            <person name="Barnstead M.E."/>
            <person name="Feldblyum T.V."/>
            <person name="Buell C.R."/>
            <person name="Ketchum K.A."/>
            <person name="Lee J.J."/>
            <person name="Ronning C.M."/>
            <person name="Koo H.L."/>
            <person name="Moffat K.S."/>
            <person name="Cronin L.A."/>
            <person name="Shen M."/>
            <person name="Pai G."/>
            <person name="Van Aken S."/>
            <person name="Umayam L."/>
            <person name="Tallon L.J."/>
            <person name="Gill J.E."/>
            <person name="Adams M.D."/>
            <person name="Carrera A.J."/>
            <person name="Creasy T.H."/>
            <person name="Goodman H.M."/>
            <person name="Somerville C.R."/>
            <person name="Copenhaver G.P."/>
            <person name="Preuss D."/>
            <person name="Nierman W.C."/>
            <person name="White O."/>
            <person name="Eisen J.A."/>
            <person name="Salzberg S.L."/>
            <person name="Fraser C.M."/>
            <person name="Venter J.C."/>
        </authorList>
    </citation>
    <scope>NUCLEOTIDE SEQUENCE [LARGE SCALE GENOMIC DNA]</scope>
    <source>
        <strain>cv. Columbia</strain>
    </source>
</reference>
<reference key="2">
    <citation type="journal article" date="2017" name="Plant J.">
        <title>Araport11: a complete reannotation of the Arabidopsis thaliana reference genome.</title>
        <authorList>
            <person name="Cheng C.Y."/>
            <person name="Krishnakumar V."/>
            <person name="Chan A.P."/>
            <person name="Thibaud-Nissen F."/>
            <person name="Schobel S."/>
            <person name="Town C.D."/>
        </authorList>
    </citation>
    <scope>GENOME REANNOTATION</scope>
    <source>
        <strain>cv. Columbia</strain>
    </source>
</reference>
<reference key="3">
    <citation type="journal article" date="2003" name="Science">
        <title>Empirical analysis of transcriptional activity in the Arabidopsis genome.</title>
        <authorList>
            <person name="Yamada K."/>
            <person name="Lim J."/>
            <person name="Dale J.M."/>
            <person name="Chen H."/>
            <person name="Shinn P."/>
            <person name="Palm C.J."/>
            <person name="Southwick A.M."/>
            <person name="Wu H.C."/>
            <person name="Kim C.J."/>
            <person name="Nguyen M."/>
            <person name="Pham P.K."/>
            <person name="Cheuk R.F."/>
            <person name="Karlin-Newmann G."/>
            <person name="Liu S.X."/>
            <person name="Lam B."/>
            <person name="Sakano H."/>
            <person name="Wu T."/>
            <person name="Yu G."/>
            <person name="Miranda M."/>
            <person name="Quach H.L."/>
            <person name="Tripp M."/>
            <person name="Chang C.H."/>
            <person name="Lee J.M."/>
            <person name="Toriumi M.J."/>
            <person name="Chan M.M."/>
            <person name="Tang C.C."/>
            <person name="Onodera C.S."/>
            <person name="Deng J.M."/>
            <person name="Akiyama K."/>
            <person name="Ansari Y."/>
            <person name="Arakawa T."/>
            <person name="Banh J."/>
            <person name="Banno F."/>
            <person name="Bowser L."/>
            <person name="Brooks S.Y."/>
            <person name="Carninci P."/>
            <person name="Chao Q."/>
            <person name="Choy N."/>
            <person name="Enju A."/>
            <person name="Goldsmith A.D."/>
            <person name="Gurjal M."/>
            <person name="Hansen N.F."/>
            <person name="Hayashizaki Y."/>
            <person name="Johnson-Hopson C."/>
            <person name="Hsuan V.W."/>
            <person name="Iida K."/>
            <person name="Karnes M."/>
            <person name="Khan S."/>
            <person name="Koesema E."/>
            <person name="Ishida J."/>
            <person name="Jiang P.X."/>
            <person name="Jones T."/>
            <person name="Kawai J."/>
            <person name="Kamiya A."/>
            <person name="Meyers C."/>
            <person name="Nakajima M."/>
            <person name="Narusaka M."/>
            <person name="Seki M."/>
            <person name="Sakurai T."/>
            <person name="Satou M."/>
            <person name="Tamse R."/>
            <person name="Vaysberg M."/>
            <person name="Wallender E.K."/>
            <person name="Wong C."/>
            <person name="Yamamura Y."/>
            <person name="Yuan S."/>
            <person name="Shinozaki K."/>
            <person name="Davis R.W."/>
            <person name="Theologis A."/>
            <person name="Ecker J.R."/>
        </authorList>
    </citation>
    <scope>NUCLEOTIDE SEQUENCE [LARGE SCALE MRNA]</scope>
    <source>
        <strain>cv. Columbia</strain>
    </source>
</reference>
<reference key="4">
    <citation type="journal article" date="2006" name="Plant Physiol.">
        <title>Protein profiling of plastoglobules in chloroplasts and chromoplasts. A surprising site for differential accumulation of metabolic enzymes.</title>
        <authorList>
            <person name="Ytterberg A.J."/>
            <person name="Peltier J.-B."/>
            <person name="van Wijk K.J."/>
        </authorList>
    </citation>
    <scope>IDENTIFICATION BY MASS SPECTROMETRY</scope>
    <scope>SUBCELLULAR LOCATION [LARGE SCALE ANALYSIS]</scope>
    <source>
        <strain>cv. Columbia</strain>
    </source>
</reference>
<reference key="5">
    <citation type="journal article" date="2012" name="Plant Physiol.">
        <title>The functional network of the Arabidopsis plastoglobule proteome based on quantitative proteomics and genome-wide coexpression analysis.</title>
        <authorList>
            <person name="Lundquist P.K."/>
            <person name="Poliakov A."/>
            <person name="Bhuiyan N.H."/>
            <person name="Zybailov B."/>
            <person name="Sun Q."/>
            <person name="van Wijk K.J."/>
        </authorList>
    </citation>
    <scope>IDENTIFICATION BY MASS SPECTROMETRY</scope>
    <scope>SUBCELLULAR LOCATION [LARGE SCALE ANALYSIS]</scope>
    <source>
        <strain>cv. Columbia</strain>
    </source>
</reference>